<dbReference type="EC" id="2.1.1.173" evidence="1"/>
<dbReference type="EC" id="2.1.1.264" evidence="1"/>
<dbReference type="EMBL" id="AE014613">
    <property type="protein sequence ID" value="AAO69477.1"/>
    <property type="molecule type" value="Genomic_DNA"/>
</dbReference>
<dbReference type="EMBL" id="AL513382">
    <property type="protein sequence ID" value="CAD08187.1"/>
    <property type="molecule type" value="Genomic_DNA"/>
</dbReference>
<dbReference type="RefSeq" id="NP_455559.1">
    <property type="nucleotide sequence ID" value="NC_003198.1"/>
</dbReference>
<dbReference type="SMR" id="Q8Z7S6"/>
<dbReference type="STRING" id="220341.gene:17585065"/>
<dbReference type="KEGG" id="stt:t1859"/>
<dbReference type="KEGG" id="sty:STY1082"/>
<dbReference type="PATRIC" id="fig|220341.7.peg.1090"/>
<dbReference type="eggNOG" id="COG0116">
    <property type="taxonomic scope" value="Bacteria"/>
</dbReference>
<dbReference type="eggNOG" id="COG1092">
    <property type="taxonomic scope" value="Bacteria"/>
</dbReference>
<dbReference type="HOGENOM" id="CLU_014042_2_0_6"/>
<dbReference type="OMA" id="TYLNWAE"/>
<dbReference type="OrthoDB" id="9809404at2"/>
<dbReference type="Proteomes" id="UP000000541">
    <property type="component" value="Chromosome"/>
</dbReference>
<dbReference type="Proteomes" id="UP000002670">
    <property type="component" value="Chromosome"/>
</dbReference>
<dbReference type="GO" id="GO:0005737">
    <property type="term" value="C:cytoplasm"/>
    <property type="evidence" value="ECO:0007669"/>
    <property type="project" value="UniProtKB-SubCell"/>
</dbReference>
<dbReference type="GO" id="GO:0052915">
    <property type="term" value="F:23S rRNA (guanine(2445)-N(2))-methyltransferase activity"/>
    <property type="evidence" value="ECO:0007669"/>
    <property type="project" value="UniProtKB-UniRule"/>
</dbReference>
<dbReference type="GO" id="GO:0003723">
    <property type="term" value="F:RNA binding"/>
    <property type="evidence" value="ECO:0007669"/>
    <property type="project" value="UniProtKB-KW"/>
</dbReference>
<dbReference type="GO" id="GO:0070043">
    <property type="term" value="F:rRNA (guanine-N7-)-methyltransferase activity"/>
    <property type="evidence" value="ECO:0007669"/>
    <property type="project" value="UniProtKB-UniRule"/>
</dbReference>
<dbReference type="CDD" id="cd02440">
    <property type="entry name" value="AdoMet_MTases"/>
    <property type="match status" value="2"/>
</dbReference>
<dbReference type="CDD" id="cd11715">
    <property type="entry name" value="THUMP_AdoMetMT"/>
    <property type="match status" value="1"/>
</dbReference>
<dbReference type="FunFam" id="3.30.750.80:FF:000001">
    <property type="entry name" value="Ribosomal RNA large subunit methyltransferase K/L"/>
    <property type="match status" value="1"/>
</dbReference>
<dbReference type="FunFam" id="3.40.50.150:FF:000039">
    <property type="entry name" value="Ribosomal RNA large subunit methyltransferase K/L"/>
    <property type="match status" value="1"/>
</dbReference>
<dbReference type="Gene3D" id="3.30.2130.30">
    <property type="match status" value="1"/>
</dbReference>
<dbReference type="Gene3D" id="3.30.750.80">
    <property type="entry name" value="RNA methyltransferase domain (HRMD) like"/>
    <property type="match status" value="1"/>
</dbReference>
<dbReference type="Gene3D" id="3.40.50.150">
    <property type="entry name" value="Vaccinia Virus protein VP39"/>
    <property type="match status" value="2"/>
</dbReference>
<dbReference type="HAMAP" id="MF_01858">
    <property type="entry name" value="23SrRNA_methyltr_KL"/>
    <property type="match status" value="1"/>
</dbReference>
<dbReference type="InterPro" id="IPR017244">
    <property type="entry name" value="23SrRNA_methyltr_KL"/>
</dbReference>
<dbReference type="InterPro" id="IPR002052">
    <property type="entry name" value="DNA_methylase_N6_adenine_CS"/>
</dbReference>
<dbReference type="InterPro" id="IPR000241">
    <property type="entry name" value="RlmKL-like_Mtase"/>
</dbReference>
<dbReference type="InterPro" id="IPR053943">
    <property type="entry name" value="RlmKL-like_Mtase_CS"/>
</dbReference>
<dbReference type="InterPro" id="IPR054170">
    <property type="entry name" value="RlmL_1st"/>
</dbReference>
<dbReference type="InterPro" id="IPR019614">
    <property type="entry name" value="SAM-dep_methyl-trfase"/>
</dbReference>
<dbReference type="InterPro" id="IPR029063">
    <property type="entry name" value="SAM-dependent_MTases_sf"/>
</dbReference>
<dbReference type="InterPro" id="IPR004114">
    <property type="entry name" value="THUMP_dom"/>
</dbReference>
<dbReference type="NCBIfam" id="NF008748">
    <property type="entry name" value="PRK11783.1"/>
    <property type="match status" value="1"/>
</dbReference>
<dbReference type="PANTHER" id="PTHR47313">
    <property type="entry name" value="RIBOSOMAL RNA LARGE SUBUNIT METHYLTRANSFERASE K/L"/>
    <property type="match status" value="1"/>
</dbReference>
<dbReference type="PANTHER" id="PTHR47313:SF1">
    <property type="entry name" value="RIBOSOMAL RNA LARGE SUBUNIT METHYLTRANSFERASE K_L"/>
    <property type="match status" value="1"/>
</dbReference>
<dbReference type="Pfam" id="PF10672">
    <property type="entry name" value="Methyltrans_SAM"/>
    <property type="match status" value="1"/>
</dbReference>
<dbReference type="Pfam" id="PF22020">
    <property type="entry name" value="RlmL_1st"/>
    <property type="match status" value="1"/>
</dbReference>
<dbReference type="Pfam" id="PF02926">
    <property type="entry name" value="THUMP"/>
    <property type="match status" value="1"/>
</dbReference>
<dbReference type="Pfam" id="PF01170">
    <property type="entry name" value="UPF0020"/>
    <property type="match status" value="1"/>
</dbReference>
<dbReference type="PIRSF" id="PIRSF037618">
    <property type="entry name" value="RNA_Mtase_bacteria_prd"/>
    <property type="match status" value="1"/>
</dbReference>
<dbReference type="PRINTS" id="PR00507">
    <property type="entry name" value="N12N6MTFRASE"/>
</dbReference>
<dbReference type="SMART" id="SM00981">
    <property type="entry name" value="THUMP"/>
    <property type="match status" value="1"/>
</dbReference>
<dbReference type="SUPFAM" id="SSF53335">
    <property type="entry name" value="S-adenosyl-L-methionine-dependent methyltransferases"/>
    <property type="match status" value="2"/>
</dbReference>
<dbReference type="PROSITE" id="PS51165">
    <property type="entry name" value="THUMP"/>
    <property type="match status" value="1"/>
</dbReference>
<dbReference type="PROSITE" id="PS01261">
    <property type="entry name" value="UPF0020"/>
    <property type="match status" value="1"/>
</dbReference>
<keyword id="KW-0963">Cytoplasm</keyword>
<keyword id="KW-0489">Methyltransferase</keyword>
<keyword id="KW-0694">RNA-binding</keyword>
<keyword id="KW-0698">rRNA processing</keyword>
<keyword id="KW-0949">S-adenosyl-L-methionine</keyword>
<keyword id="KW-0808">Transferase</keyword>
<gene>
    <name evidence="1" type="primary">rlmL</name>
    <name type="ordered locus">STY1082</name>
    <name type="ordered locus">t1859</name>
</gene>
<evidence type="ECO:0000255" key="1">
    <source>
        <dbReference type="HAMAP-Rule" id="MF_01858"/>
    </source>
</evidence>
<sequence length="702" mass="78878">MNSLFASTARGLEELLKIELEKLGAVGCQVVQGGVHFQGDTRLIYQSLMWSRLASRIILPMGECKVYSDLDLYFGVQAINWTEIFNPGATFAVHFSGLNDTIRNSQYGAMKVKDAIVDAFTRKNLPRPNVDRESPDLRINVWLNKETASIALDLSGDGLHLRGYRDRTGLAPIKETLAAAIVMRSGWQPGTPLLDPMCGSGTLLIEAAMWATDRAPGLHRGHWGFSGWAQHDEAIWQEVKAEAQTRARKGLAEYSSHFYGSDSDARVIERARSNARRAGIGELITFEVKDVAQLSNPLPKGPYGTVISNPPYGERLDSDPALIALHSLLGRTMKNQFGGWNLSLFSASPDLLGSLQLRADKQFKAKNGPLDCVQKNYHIAETTADSKPATVAEDYANRLRKNLKKLEKWARQEGIECYRLYDADLPEYNVAVDRYGDWAVIQEYAPPKTVDAQKARQRLFDIIAATLSVLGIPPNKLVLKTRERQKGKNQYQKMSEKGEFLEVSEYNARLWVNLTDYLDTGLFLDHRIARRMLGEMSKGKDFLNLFSYTGSASVHAGLGGARNTTTVDMSRTYLEWAERNLRLNGLSGRAHRLIQADCLGWLREANEQFDLIFIDPPTFSNSKRMEESFDVQRDHVALMKDLKRLLRKGGTIMFSNNKRGFRMDLEGLAELGLTAQEITQKTLSPDFARNRQIHNCWLIRAA</sequence>
<organism>
    <name type="scientific">Salmonella typhi</name>
    <dbReference type="NCBI Taxonomy" id="90370"/>
    <lineage>
        <taxon>Bacteria</taxon>
        <taxon>Pseudomonadati</taxon>
        <taxon>Pseudomonadota</taxon>
        <taxon>Gammaproteobacteria</taxon>
        <taxon>Enterobacterales</taxon>
        <taxon>Enterobacteriaceae</taxon>
        <taxon>Salmonella</taxon>
    </lineage>
</organism>
<protein>
    <recommendedName>
        <fullName evidence="1">Ribosomal RNA large subunit methyltransferase K/L</fullName>
    </recommendedName>
    <domain>
        <recommendedName>
            <fullName evidence="1">23S rRNA m2G2445 methyltransferase</fullName>
            <ecNumber evidence="1">2.1.1.173</ecNumber>
        </recommendedName>
        <alternativeName>
            <fullName evidence="1">rRNA (guanine-N(2)-)-methyltransferase RlmL</fullName>
        </alternativeName>
    </domain>
    <domain>
        <recommendedName>
            <fullName evidence="1">23S rRNA m7G2069 methyltransferase</fullName>
            <ecNumber evidence="1">2.1.1.264</ecNumber>
        </recommendedName>
        <alternativeName>
            <fullName evidence="1">rRNA (guanine-N(7)-)-methyltransferase RlmK</fullName>
        </alternativeName>
    </domain>
</protein>
<feature type="chain" id="PRO_0000366816" description="Ribosomal RNA large subunit methyltransferase K/L">
    <location>
        <begin position="1"/>
        <end position="702"/>
    </location>
</feature>
<feature type="domain" description="THUMP" evidence="1">
    <location>
        <begin position="43"/>
        <end position="154"/>
    </location>
</feature>
<reference key="1">
    <citation type="journal article" date="2001" name="Nature">
        <title>Complete genome sequence of a multiple drug resistant Salmonella enterica serovar Typhi CT18.</title>
        <authorList>
            <person name="Parkhill J."/>
            <person name="Dougan G."/>
            <person name="James K.D."/>
            <person name="Thomson N.R."/>
            <person name="Pickard D."/>
            <person name="Wain J."/>
            <person name="Churcher C.M."/>
            <person name="Mungall K.L."/>
            <person name="Bentley S.D."/>
            <person name="Holden M.T.G."/>
            <person name="Sebaihia M."/>
            <person name="Baker S."/>
            <person name="Basham D."/>
            <person name="Brooks K."/>
            <person name="Chillingworth T."/>
            <person name="Connerton P."/>
            <person name="Cronin A."/>
            <person name="Davis P."/>
            <person name="Davies R.M."/>
            <person name="Dowd L."/>
            <person name="White N."/>
            <person name="Farrar J."/>
            <person name="Feltwell T."/>
            <person name="Hamlin N."/>
            <person name="Haque A."/>
            <person name="Hien T.T."/>
            <person name="Holroyd S."/>
            <person name="Jagels K."/>
            <person name="Krogh A."/>
            <person name="Larsen T.S."/>
            <person name="Leather S."/>
            <person name="Moule S."/>
            <person name="O'Gaora P."/>
            <person name="Parry C."/>
            <person name="Quail M.A."/>
            <person name="Rutherford K.M."/>
            <person name="Simmonds M."/>
            <person name="Skelton J."/>
            <person name="Stevens K."/>
            <person name="Whitehead S."/>
            <person name="Barrell B.G."/>
        </authorList>
    </citation>
    <scope>NUCLEOTIDE SEQUENCE [LARGE SCALE GENOMIC DNA]</scope>
    <source>
        <strain>CT18</strain>
    </source>
</reference>
<reference key="2">
    <citation type="journal article" date="2003" name="J. Bacteriol.">
        <title>Comparative genomics of Salmonella enterica serovar Typhi strains Ty2 and CT18.</title>
        <authorList>
            <person name="Deng W."/>
            <person name="Liou S.-R."/>
            <person name="Plunkett G. III"/>
            <person name="Mayhew G.F."/>
            <person name="Rose D.J."/>
            <person name="Burland V."/>
            <person name="Kodoyianni V."/>
            <person name="Schwartz D.C."/>
            <person name="Blattner F.R."/>
        </authorList>
    </citation>
    <scope>NUCLEOTIDE SEQUENCE [LARGE SCALE GENOMIC DNA]</scope>
    <source>
        <strain>ATCC 700931 / Ty2</strain>
    </source>
</reference>
<comment type="function">
    <text evidence="1">Specifically methylates the guanine in position 2445 (m2G2445) and the guanine in position 2069 (m7G2069) of 23S rRNA.</text>
</comment>
<comment type="catalytic activity">
    <reaction evidence="1">
        <text>guanosine(2445) in 23S rRNA + S-adenosyl-L-methionine = N(2)-methylguanosine(2445) in 23S rRNA + S-adenosyl-L-homocysteine + H(+)</text>
        <dbReference type="Rhea" id="RHEA:42740"/>
        <dbReference type="Rhea" id="RHEA-COMP:10215"/>
        <dbReference type="Rhea" id="RHEA-COMP:10216"/>
        <dbReference type="ChEBI" id="CHEBI:15378"/>
        <dbReference type="ChEBI" id="CHEBI:57856"/>
        <dbReference type="ChEBI" id="CHEBI:59789"/>
        <dbReference type="ChEBI" id="CHEBI:74269"/>
        <dbReference type="ChEBI" id="CHEBI:74481"/>
        <dbReference type="EC" id="2.1.1.173"/>
    </reaction>
</comment>
<comment type="catalytic activity">
    <reaction evidence="1">
        <text>guanosine(2069) in 23S rRNA + S-adenosyl-L-methionine = N(2)-methylguanosine(2069) in 23S rRNA + S-adenosyl-L-homocysteine + H(+)</text>
        <dbReference type="Rhea" id="RHEA:43772"/>
        <dbReference type="Rhea" id="RHEA-COMP:10688"/>
        <dbReference type="Rhea" id="RHEA-COMP:10689"/>
        <dbReference type="ChEBI" id="CHEBI:15378"/>
        <dbReference type="ChEBI" id="CHEBI:57856"/>
        <dbReference type="ChEBI" id="CHEBI:59789"/>
        <dbReference type="ChEBI" id="CHEBI:74269"/>
        <dbReference type="ChEBI" id="CHEBI:74481"/>
        <dbReference type="EC" id="2.1.1.264"/>
    </reaction>
</comment>
<comment type="subcellular location">
    <subcellularLocation>
        <location evidence="1">Cytoplasm</location>
    </subcellularLocation>
</comment>
<comment type="similarity">
    <text evidence="1">Belongs to the methyltransferase superfamily. RlmKL family.</text>
</comment>
<accession>Q8Z7S6</accession>
<accession>Q7C957</accession>
<name>RLMKL_SALTI</name>
<proteinExistence type="inferred from homology"/>